<name>RS3A_ORYSJ</name>
<evidence type="ECO:0000255" key="1">
    <source>
        <dbReference type="HAMAP-Rule" id="MF_03122"/>
    </source>
</evidence>
<evidence type="ECO:0000256" key="2">
    <source>
        <dbReference type="SAM" id="MobiDB-lite"/>
    </source>
</evidence>
<evidence type="ECO:0000305" key="3"/>
<evidence type="ECO:0000312" key="4">
    <source>
        <dbReference type="EMBL" id="EAZ25948.1"/>
    </source>
</evidence>
<gene>
    <name evidence="1" type="primary">RPS3A</name>
    <name type="synonym">CYC07</name>
    <name type="synonym">T151</name>
    <name type="ordered locus">Os03g0200500</name>
    <name type="ordered locus">LOC_Os03g10340</name>
    <name evidence="4" type="ORF">OsJ_09804</name>
</gene>
<accession>P49397</accession>
<accession>Q10QD8</accession>
<protein>
    <recommendedName>
        <fullName evidence="1">Small ribosomal subunit protein eS1</fullName>
    </recommendedName>
    <alternativeName>
        <fullName evidence="3">40S ribosomal protein S3a</fullName>
    </alternativeName>
    <alternativeName>
        <fullName>CYC07 protein</fullName>
    </alternativeName>
</protein>
<feature type="initiator methionine" description="Removed" evidence="1">
    <location>
        <position position="1"/>
    </location>
</feature>
<feature type="chain" id="PRO_0000153536" description="Small ribosomal subunit protein eS1">
    <location>
        <begin position="2"/>
        <end position="262"/>
    </location>
</feature>
<feature type="region of interest" description="Disordered" evidence="2">
    <location>
        <begin position="1"/>
        <end position="20"/>
    </location>
</feature>
<feature type="compositionally biased region" description="Basic residues" evidence="2">
    <location>
        <begin position="1"/>
        <end position="18"/>
    </location>
</feature>
<sequence length="262" mass="29728">MAVGKNKRISKGKKGSKKKTVDPFAKKDWYDIKAPSVFNVRNIGKTLVSRTQGTKIASEGLKHRVFEVSLADLQNDEDQAYRKIRLRAEDVQGKNVLTNFWGMSFTTDKLRSLVKKWQTLIEAHVDVKTTDGYMLRLFCIGFTKRRPNQVKRTCYAQASQIRQIRRKMVEIMANQASSCDLKELVSKFIPEVIGKEIEKATSSIFPLQNVFVRKVKILKAPKFDLGKLMEVHGDYAKEDIGTKLDRPAEDEAMAGQEVAAAE</sequence>
<organism>
    <name type="scientific">Oryza sativa subsp. japonica</name>
    <name type="common">Rice</name>
    <dbReference type="NCBI Taxonomy" id="39947"/>
    <lineage>
        <taxon>Eukaryota</taxon>
        <taxon>Viridiplantae</taxon>
        <taxon>Streptophyta</taxon>
        <taxon>Embryophyta</taxon>
        <taxon>Tracheophyta</taxon>
        <taxon>Spermatophyta</taxon>
        <taxon>Magnoliopsida</taxon>
        <taxon>Liliopsida</taxon>
        <taxon>Poales</taxon>
        <taxon>Poaceae</taxon>
        <taxon>BOP clade</taxon>
        <taxon>Oryzoideae</taxon>
        <taxon>Oryzeae</taxon>
        <taxon>Oryzinae</taxon>
        <taxon>Oryza</taxon>
        <taxon>Oryza sativa</taxon>
    </lineage>
</organism>
<dbReference type="EMBL" id="D26060">
    <property type="protein sequence ID" value="BAA05059.1"/>
    <property type="molecule type" value="mRNA"/>
</dbReference>
<dbReference type="EMBL" id="AC115687">
    <property type="status" value="NOT_ANNOTATED_CDS"/>
    <property type="molecule type" value="Genomic_DNA"/>
</dbReference>
<dbReference type="EMBL" id="DP000009">
    <property type="protein sequence ID" value="ABF94491.1"/>
    <property type="molecule type" value="Genomic_DNA"/>
</dbReference>
<dbReference type="EMBL" id="AP008209">
    <property type="protein sequence ID" value="BAF11203.1"/>
    <property type="molecule type" value="Genomic_DNA"/>
</dbReference>
<dbReference type="EMBL" id="AP014959">
    <property type="protein sequence ID" value="BAS82813.1"/>
    <property type="molecule type" value="Genomic_DNA"/>
</dbReference>
<dbReference type="EMBL" id="CM000140">
    <property type="protein sequence ID" value="EAZ25948.1"/>
    <property type="molecule type" value="Genomic_DNA"/>
</dbReference>
<dbReference type="EMBL" id="AK069251">
    <property type="protein sequence ID" value="BAG91340.1"/>
    <property type="molecule type" value="mRNA"/>
</dbReference>
<dbReference type="EMBL" id="AK104243">
    <property type="protein sequence ID" value="BAG96538.1"/>
    <property type="molecule type" value="mRNA"/>
</dbReference>
<dbReference type="PIR" id="S42540">
    <property type="entry name" value="S42540"/>
</dbReference>
<dbReference type="RefSeq" id="XP_015631418.1">
    <property type="nucleotide sequence ID" value="XM_015775932.1"/>
</dbReference>
<dbReference type="SMR" id="P49397"/>
<dbReference type="FunCoup" id="P49397">
    <property type="interactions" value="2289"/>
</dbReference>
<dbReference type="STRING" id="39947.P49397"/>
<dbReference type="PaxDb" id="39947-P49397"/>
<dbReference type="EnsemblPlants" id="Os03t0200500-01">
    <property type="protein sequence ID" value="Os03t0200500-01"/>
    <property type="gene ID" value="Os03g0200500"/>
</dbReference>
<dbReference type="Gramene" id="Os03t0200500-01">
    <property type="protein sequence ID" value="Os03t0200500-01"/>
    <property type="gene ID" value="Os03g0200500"/>
</dbReference>
<dbReference type="KEGG" id="dosa:Os03g0200500"/>
<dbReference type="eggNOG" id="KOG1628">
    <property type="taxonomic scope" value="Eukaryota"/>
</dbReference>
<dbReference type="HOGENOM" id="CLU_062507_0_0_1"/>
<dbReference type="InParanoid" id="P49397"/>
<dbReference type="OMA" id="MHNDESD"/>
<dbReference type="OrthoDB" id="9834376at2759"/>
<dbReference type="Proteomes" id="UP000000763">
    <property type="component" value="Chromosome 3"/>
</dbReference>
<dbReference type="Proteomes" id="UP000007752">
    <property type="component" value="Chromosome 3"/>
</dbReference>
<dbReference type="Proteomes" id="UP000059680">
    <property type="component" value="Chromosome 3"/>
</dbReference>
<dbReference type="ExpressionAtlas" id="P49397">
    <property type="expression patterns" value="baseline and differential"/>
</dbReference>
<dbReference type="GO" id="GO:0005829">
    <property type="term" value="C:cytosol"/>
    <property type="evidence" value="ECO:0000318"/>
    <property type="project" value="GO_Central"/>
</dbReference>
<dbReference type="GO" id="GO:0022627">
    <property type="term" value="C:cytosolic small ribosomal subunit"/>
    <property type="evidence" value="ECO:0007669"/>
    <property type="project" value="UniProtKB-UniRule"/>
</dbReference>
<dbReference type="GO" id="GO:0003735">
    <property type="term" value="F:structural constituent of ribosome"/>
    <property type="evidence" value="ECO:0007669"/>
    <property type="project" value="UniProtKB-UniRule"/>
</dbReference>
<dbReference type="GO" id="GO:0006412">
    <property type="term" value="P:translation"/>
    <property type="evidence" value="ECO:0007669"/>
    <property type="project" value="UniProtKB-UniRule"/>
</dbReference>
<dbReference type="HAMAP" id="MF_03122">
    <property type="entry name" value="Ribosomal_eS1_euk"/>
    <property type="match status" value="1"/>
</dbReference>
<dbReference type="InterPro" id="IPR001593">
    <property type="entry name" value="Ribosomal_eS1"/>
</dbReference>
<dbReference type="InterPro" id="IPR018281">
    <property type="entry name" value="Ribosomal_eS1_CS"/>
</dbReference>
<dbReference type="InterPro" id="IPR027500">
    <property type="entry name" value="Ribosomal_eS1_euk"/>
</dbReference>
<dbReference type="PANTHER" id="PTHR11830">
    <property type="entry name" value="40S RIBOSOMAL PROTEIN S3A"/>
    <property type="match status" value="1"/>
</dbReference>
<dbReference type="Pfam" id="PF01015">
    <property type="entry name" value="Ribosomal_S3Ae"/>
    <property type="match status" value="1"/>
</dbReference>
<dbReference type="SMART" id="SM01397">
    <property type="entry name" value="Ribosomal_S3Ae"/>
    <property type="match status" value="1"/>
</dbReference>
<dbReference type="PROSITE" id="PS01191">
    <property type="entry name" value="RIBOSOMAL_S3AE"/>
    <property type="match status" value="1"/>
</dbReference>
<reference key="1">
    <citation type="journal article" date="1994" name="Plant Mol. Biol.">
        <title>Isolation and characterization of a rice cDNA similar to the S-phase-specific cyc07 gene.</title>
        <authorList>
            <person name="Uchimiya H."/>
            <person name="Kidou S."/>
            <person name="Tsuge T."/>
            <person name="Kato A."/>
            <person name="Umeda M."/>
        </authorList>
    </citation>
    <scope>NUCLEOTIDE SEQUENCE [MRNA]</scope>
    <source>
        <tissue>Callus</tissue>
    </source>
</reference>
<reference key="2">
    <citation type="journal article" date="2005" name="Genome Res.">
        <title>Sequence, annotation, and analysis of synteny between rice chromosome 3 and diverged grass species.</title>
        <authorList>
            <consortium name="The rice chromosome 3 sequencing consortium"/>
            <person name="Buell C.R."/>
            <person name="Yuan Q."/>
            <person name="Ouyang S."/>
            <person name="Liu J."/>
            <person name="Zhu W."/>
            <person name="Wang A."/>
            <person name="Maiti R."/>
            <person name="Haas B."/>
            <person name="Wortman J."/>
            <person name="Pertea M."/>
            <person name="Jones K.M."/>
            <person name="Kim M."/>
            <person name="Overton L."/>
            <person name="Tsitrin T."/>
            <person name="Fadrosh D."/>
            <person name="Bera J."/>
            <person name="Weaver B."/>
            <person name="Jin S."/>
            <person name="Johri S."/>
            <person name="Reardon M."/>
            <person name="Webb K."/>
            <person name="Hill J."/>
            <person name="Moffat K."/>
            <person name="Tallon L."/>
            <person name="Van Aken S."/>
            <person name="Lewis M."/>
            <person name="Utterback T."/>
            <person name="Feldblyum T."/>
            <person name="Zismann V."/>
            <person name="Iobst S."/>
            <person name="Hsiao J."/>
            <person name="de Vazeille A.R."/>
            <person name="Salzberg S.L."/>
            <person name="White O."/>
            <person name="Fraser C.M."/>
            <person name="Yu Y."/>
            <person name="Kim H."/>
            <person name="Rambo T."/>
            <person name="Currie J."/>
            <person name="Collura K."/>
            <person name="Kernodle-Thompson S."/>
            <person name="Wei F."/>
            <person name="Kudrna K."/>
            <person name="Ammiraju J.S.S."/>
            <person name="Luo M."/>
            <person name="Goicoechea J.L."/>
            <person name="Wing R.A."/>
            <person name="Henry D."/>
            <person name="Oates R."/>
            <person name="Palmer M."/>
            <person name="Pries G."/>
            <person name="Saski C."/>
            <person name="Simmons J."/>
            <person name="Soderlund C."/>
            <person name="Nelson W."/>
            <person name="de la Bastide M."/>
            <person name="Spiegel L."/>
            <person name="Nascimento L."/>
            <person name="Huang E."/>
            <person name="Preston R."/>
            <person name="Zutavern T."/>
            <person name="Palmer L."/>
            <person name="O'Shaughnessy A."/>
            <person name="Dike S."/>
            <person name="McCombie W.R."/>
            <person name="Minx P."/>
            <person name="Cordum H."/>
            <person name="Wilson R."/>
            <person name="Jin W."/>
            <person name="Lee H.R."/>
            <person name="Jiang J."/>
            <person name="Jackson S."/>
        </authorList>
    </citation>
    <scope>NUCLEOTIDE SEQUENCE [LARGE SCALE GENOMIC DNA]</scope>
    <source>
        <strain>cv. Nipponbare</strain>
    </source>
</reference>
<reference key="3">
    <citation type="journal article" date="2005" name="Nature">
        <title>The map-based sequence of the rice genome.</title>
        <authorList>
            <consortium name="International rice genome sequencing project (IRGSP)"/>
        </authorList>
    </citation>
    <scope>NUCLEOTIDE SEQUENCE [LARGE SCALE GENOMIC DNA]</scope>
    <source>
        <strain>cv. Nipponbare</strain>
    </source>
</reference>
<reference key="4">
    <citation type="journal article" date="2008" name="Nucleic Acids Res.">
        <title>The rice annotation project database (RAP-DB): 2008 update.</title>
        <authorList>
            <consortium name="The rice annotation project (RAP)"/>
        </authorList>
    </citation>
    <scope>GENOME REANNOTATION</scope>
    <source>
        <strain>cv. Nipponbare</strain>
    </source>
</reference>
<reference key="5">
    <citation type="journal article" date="2013" name="Rice">
        <title>Improvement of the Oryza sativa Nipponbare reference genome using next generation sequence and optical map data.</title>
        <authorList>
            <person name="Kawahara Y."/>
            <person name="de la Bastide M."/>
            <person name="Hamilton J.P."/>
            <person name="Kanamori H."/>
            <person name="McCombie W.R."/>
            <person name="Ouyang S."/>
            <person name="Schwartz D.C."/>
            <person name="Tanaka T."/>
            <person name="Wu J."/>
            <person name="Zhou S."/>
            <person name="Childs K.L."/>
            <person name="Davidson R.M."/>
            <person name="Lin H."/>
            <person name="Quesada-Ocampo L."/>
            <person name="Vaillancourt B."/>
            <person name="Sakai H."/>
            <person name="Lee S.S."/>
            <person name="Kim J."/>
            <person name="Numa H."/>
            <person name="Itoh T."/>
            <person name="Buell C.R."/>
            <person name="Matsumoto T."/>
        </authorList>
    </citation>
    <scope>GENOME REANNOTATION</scope>
    <source>
        <strain>cv. Nipponbare</strain>
    </source>
</reference>
<reference key="6">
    <citation type="journal article" date="2005" name="PLoS Biol.">
        <title>The genomes of Oryza sativa: a history of duplications.</title>
        <authorList>
            <person name="Yu J."/>
            <person name="Wang J."/>
            <person name="Lin W."/>
            <person name="Li S."/>
            <person name="Li H."/>
            <person name="Zhou J."/>
            <person name="Ni P."/>
            <person name="Dong W."/>
            <person name="Hu S."/>
            <person name="Zeng C."/>
            <person name="Zhang J."/>
            <person name="Zhang Y."/>
            <person name="Li R."/>
            <person name="Xu Z."/>
            <person name="Li S."/>
            <person name="Li X."/>
            <person name="Zheng H."/>
            <person name="Cong L."/>
            <person name="Lin L."/>
            <person name="Yin J."/>
            <person name="Geng J."/>
            <person name="Li G."/>
            <person name="Shi J."/>
            <person name="Liu J."/>
            <person name="Lv H."/>
            <person name="Li J."/>
            <person name="Wang J."/>
            <person name="Deng Y."/>
            <person name="Ran L."/>
            <person name="Shi X."/>
            <person name="Wang X."/>
            <person name="Wu Q."/>
            <person name="Li C."/>
            <person name="Ren X."/>
            <person name="Wang J."/>
            <person name="Wang X."/>
            <person name="Li D."/>
            <person name="Liu D."/>
            <person name="Zhang X."/>
            <person name="Ji Z."/>
            <person name="Zhao W."/>
            <person name="Sun Y."/>
            <person name="Zhang Z."/>
            <person name="Bao J."/>
            <person name="Han Y."/>
            <person name="Dong L."/>
            <person name="Ji J."/>
            <person name="Chen P."/>
            <person name="Wu S."/>
            <person name="Liu J."/>
            <person name="Xiao Y."/>
            <person name="Bu D."/>
            <person name="Tan J."/>
            <person name="Yang L."/>
            <person name="Ye C."/>
            <person name="Zhang J."/>
            <person name="Xu J."/>
            <person name="Zhou Y."/>
            <person name="Yu Y."/>
            <person name="Zhang B."/>
            <person name="Zhuang S."/>
            <person name="Wei H."/>
            <person name="Liu B."/>
            <person name="Lei M."/>
            <person name="Yu H."/>
            <person name="Li Y."/>
            <person name="Xu H."/>
            <person name="Wei S."/>
            <person name="He X."/>
            <person name="Fang L."/>
            <person name="Zhang Z."/>
            <person name="Zhang Y."/>
            <person name="Huang X."/>
            <person name="Su Z."/>
            <person name="Tong W."/>
            <person name="Li J."/>
            <person name="Tong Z."/>
            <person name="Li S."/>
            <person name="Ye J."/>
            <person name="Wang L."/>
            <person name="Fang L."/>
            <person name="Lei T."/>
            <person name="Chen C.-S."/>
            <person name="Chen H.-C."/>
            <person name="Xu Z."/>
            <person name="Li H."/>
            <person name="Huang H."/>
            <person name="Zhang F."/>
            <person name="Xu H."/>
            <person name="Li N."/>
            <person name="Zhao C."/>
            <person name="Li S."/>
            <person name="Dong L."/>
            <person name="Huang Y."/>
            <person name="Li L."/>
            <person name="Xi Y."/>
            <person name="Qi Q."/>
            <person name="Li W."/>
            <person name="Zhang B."/>
            <person name="Hu W."/>
            <person name="Zhang Y."/>
            <person name="Tian X."/>
            <person name="Jiao Y."/>
            <person name="Liang X."/>
            <person name="Jin J."/>
            <person name="Gao L."/>
            <person name="Zheng W."/>
            <person name="Hao B."/>
            <person name="Liu S.-M."/>
            <person name="Wang W."/>
            <person name="Yuan L."/>
            <person name="Cao M."/>
            <person name="McDermott J."/>
            <person name="Samudrala R."/>
            <person name="Wang J."/>
            <person name="Wong G.K.-S."/>
            <person name="Yang H."/>
        </authorList>
    </citation>
    <scope>NUCLEOTIDE SEQUENCE [LARGE SCALE GENOMIC DNA]</scope>
    <source>
        <strain>cv. Nipponbare</strain>
    </source>
</reference>
<reference key="7">
    <citation type="journal article" date="2003" name="Science">
        <title>Collection, mapping, and annotation of over 28,000 cDNA clones from japonica rice.</title>
        <authorList>
            <consortium name="The rice full-length cDNA consortium"/>
        </authorList>
    </citation>
    <scope>NUCLEOTIDE SEQUENCE [LARGE SCALE MRNA]</scope>
    <source>
        <strain>cv. Nipponbare</strain>
    </source>
</reference>
<keyword id="KW-0963">Cytoplasm</keyword>
<keyword id="KW-1185">Reference proteome</keyword>
<keyword id="KW-0687">Ribonucleoprotein</keyword>
<keyword id="KW-0689">Ribosomal protein</keyword>
<proteinExistence type="evidence at transcript level"/>
<comment type="subunit">
    <text evidence="1">Component of the small ribosomal subunit. Mature ribosomes consist of a small (40S) and a large (60S) subunit. The 40S subunit contains about 33 different proteins and 1 molecule of RNA (18S). The 60S subunit contains about 49 different proteins and 3 molecules of RNA (25S, 5.8S and 5S).</text>
</comment>
<comment type="subcellular location">
    <subcellularLocation>
        <location evidence="1">Cytoplasm</location>
    </subcellularLocation>
</comment>
<comment type="similarity">
    <text evidence="1">Belongs to the eukaryotic ribosomal protein eS1 family.</text>
</comment>